<name>TXD09_LYCSI</name>
<comment type="subcellular location">
    <subcellularLocation>
        <location evidence="1">Secreted</location>
    </subcellularLocation>
</comment>
<comment type="tissue specificity">
    <text>Expressed by the venom gland.</text>
</comment>
<comment type="domain">
    <text evidence="1">The presence of a 'disulfide through disulfide kOR' structurally defines this protein as a knottin.</text>
</comment>
<comment type="PTM">
    <text evidence="3">Contains 6 disulfide bonds.</text>
</comment>
<comment type="similarity">
    <text evidence="3">Belongs to the neurotoxin 05 (agouti) family.</text>
</comment>
<keyword id="KW-1015">Disulfide bond</keyword>
<keyword id="KW-0960">Knottin</keyword>
<keyword id="KW-0964">Secreted</keyword>
<keyword id="KW-0732">Signal</keyword>
<keyword id="KW-0800">Toxin</keyword>
<feature type="signal peptide" evidence="2">
    <location>
        <begin position="1"/>
        <end position="16"/>
    </location>
</feature>
<feature type="propeptide" id="PRO_0000401873" evidence="1">
    <location>
        <begin position="17"/>
        <end position="54"/>
    </location>
</feature>
<feature type="chain" id="PRO_0000401874" description="U13-lycotoxin-Ls1a">
    <location>
        <begin position="55"/>
        <end position="120"/>
    </location>
</feature>
<feature type="domain" description="Agouti">
    <location>
        <begin position="56"/>
        <end position="95"/>
    </location>
</feature>
<feature type="disulfide bond" evidence="1">
    <location>
        <begin position="56"/>
        <end position="70"/>
    </location>
</feature>
<feature type="disulfide bond" evidence="1">
    <location>
        <begin position="63"/>
        <end position="76"/>
    </location>
</feature>
<feature type="disulfide bond" evidence="1">
    <location>
        <begin position="69"/>
        <end position="87"/>
    </location>
</feature>
<feature type="disulfide bond" evidence="1">
    <location>
        <begin position="78"/>
        <end position="85"/>
    </location>
</feature>
<reference key="1">
    <citation type="journal article" date="2010" name="Zoology">
        <title>Transcriptome analysis of the venom glands of the Chinese wolf spider Lycosa singoriensis.</title>
        <authorList>
            <person name="Zhang Y."/>
            <person name="Chen J."/>
            <person name="Tang X."/>
            <person name="Wang F."/>
            <person name="Jiang L."/>
            <person name="Xiong X."/>
            <person name="Wang M."/>
            <person name="Rong M."/>
            <person name="Liu Z."/>
            <person name="Liang S."/>
        </authorList>
    </citation>
    <scope>NUCLEOTIDE SEQUENCE [LARGE SCALE MRNA]</scope>
    <source>
        <tissue>Venom gland</tissue>
    </source>
</reference>
<evidence type="ECO:0000250" key="1"/>
<evidence type="ECO:0000255" key="2"/>
<evidence type="ECO:0000305" key="3"/>
<organism>
    <name type="scientific">Lycosa singoriensis</name>
    <name type="common">Wolf spider</name>
    <name type="synonym">Aranea singoriensis</name>
    <dbReference type="NCBI Taxonomy" id="434756"/>
    <lineage>
        <taxon>Eukaryota</taxon>
        <taxon>Metazoa</taxon>
        <taxon>Ecdysozoa</taxon>
        <taxon>Arthropoda</taxon>
        <taxon>Chelicerata</taxon>
        <taxon>Arachnida</taxon>
        <taxon>Araneae</taxon>
        <taxon>Araneomorphae</taxon>
        <taxon>Entelegynae</taxon>
        <taxon>Lycosoidea</taxon>
        <taxon>Lycosidae</taxon>
        <taxon>Lycosa</taxon>
    </lineage>
</organism>
<accession>B6DD27</accession>
<protein>
    <recommendedName>
        <fullName>U13-lycotoxin-Ls1a</fullName>
    </recommendedName>
    <alternativeName>
        <fullName>Toxin-like structure LSTX-L9</fullName>
    </alternativeName>
</protein>
<sequence>MKILFVLISILHAVYCFSSEEDVDSAYLANELEPVEDINSEQYAALEPKEEHERSCADMGQDCKDDCDCCLNIATCNCWFGRYFCSCTFGDYQTCLRKKGKCKRNRPQSCPRSNLNRKKG</sequence>
<dbReference type="EMBL" id="EU926111">
    <property type="protein sequence ID" value="ACI41443.1"/>
    <property type="molecule type" value="mRNA"/>
</dbReference>
<dbReference type="EMBL" id="FM864115">
    <property type="protein sequence ID" value="CAS03712.1"/>
    <property type="molecule type" value="mRNA"/>
</dbReference>
<dbReference type="SMR" id="B6DD27"/>
<dbReference type="ArachnoServer" id="AS001042">
    <property type="toxin name" value="U13-lycotoxin-Ls1a"/>
</dbReference>
<dbReference type="GO" id="GO:0005576">
    <property type="term" value="C:extracellular region"/>
    <property type="evidence" value="ECO:0007669"/>
    <property type="project" value="UniProtKB-SubCell"/>
</dbReference>
<dbReference type="GO" id="GO:0090729">
    <property type="term" value="F:toxin activity"/>
    <property type="evidence" value="ECO:0007669"/>
    <property type="project" value="UniProtKB-KW"/>
</dbReference>
<proteinExistence type="evidence at transcript level"/>